<keyword id="KW-0963">Cytoplasm</keyword>
<keyword id="KW-0488">Methylation</keyword>
<keyword id="KW-0648">Protein biosynthesis</keyword>
<proteinExistence type="inferred from homology"/>
<protein>
    <recommendedName>
        <fullName evidence="1">Peptide chain release factor 1</fullName>
        <shortName evidence="1">RF-1</shortName>
    </recommendedName>
</protein>
<comment type="function">
    <text evidence="1">Peptide chain release factor 1 directs the termination of translation in response to the peptide chain termination codons UAG and UAA.</text>
</comment>
<comment type="subcellular location">
    <subcellularLocation>
        <location evidence="1">Cytoplasm</location>
    </subcellularLocation>
</comment>
<comment type="PTM">
    <text evidence="1">Methylated by PrmC. Methylation increases the termination efficiency of RF1.</text>
</comment>
<comment type="similarity">
    <text evidence="1">Belongs to the prokaryotic/mitochondrial release factor family.</text>
</comment>
<accession>B4RN52</accession>
<organism>
    <name type="scientific">Neisseria gonorrhoeae (strain NCCP11945)</name>
    <dbReference type="NCBI Taxonomy" id="521006"/>
    <lineage>
        <taxon>Bacteria</taxon>
        <taxon>Pseudomonadati</taxon>
        <taxon>Pseudomonadota</taxon>
        <taxon>Betaproteobacteria</taxon>
        <taxon>Neisseriales</taxon>
        <taxon>Neisseriaceae</taxon>
        <taxon>Neisseria</taxon>
    </lineage>
</organism>
<evidence type="ECO:0000255" key="1">
    <source>
        <dbReference type="HAMAP-Rule" id="MF_00093"/>
    </source>
</evidence>
<feature type="chain" id="PRO_1000093479" description="Peptide chain release factor 1">
    <location>
        <begin position="1"/>
        <end position="358"/>
    </location>
</feature>
<feature type="modified residue" description="N5-methylglutamine" evidence="1">
    <location>
        <position position="235"/>
    </location>
</feature>
<sequence length="358" mass="39722">MKPSILEKLQQLGDRLEEVTHLLGQPEATSDMDNYRKLTREHAELTPVVEVFQNYRLAQSDLADAEEMLSDPEMKDFAAEEIEAAKAKIDELDTELQKLLLPKDADDDKNIFIEIRAGTGGGEAALFAGDLLRMYSRYAERNRWQVEIVSANESELGGYKEVIARIVGLGAYSRLKFESGGHRVQRVPATESQGRIHTSACTVAVMPEADELEDIELNPADLRTDTFRASGAGGQHINKTDSAVRITHLPTGMVVECQDGRSQHANKAQAMKVLAARLNDAQKREVQAKEAAERKSLIGSGDRSERIRTYNYPQGRVTDHRINLTLHKLDFVMDGDLAEITDALIAEHQAELLAAMGD</sequence>
<name>RF1_NEIG2</name>
<dbReference type="EMBL" id="CP001050">
    <property type="protein sequence ID" value="ACF30216.1"/>
    <property type="molecule type" value="Genomic_DNA"/>
</dbReference>
<dbReference type="RefSeq" id="WP_003691675.1">
    <property type="nucleotide sequence ID" value="NC_011035.1"/>
</dbReference>
<dbReference type="SMR" id="B4RN52"/>
<dbReference type="GeneID" id="66753539"/>
<dbReference type="KEGG" id="ngk:NGK_1562"/>
<dbReference type="HOGENOM" id="CLU_036856_0_1_4"/>
<dbReference type="Proteomes" id="UP000002564">
    <property type="component" value="Chromosome"/>
</dbReference>
<dbReference type="GO" id="GO:0005737">
    <property type="term" value="C:cytoplasm"/>
    <property type="evidence" value="ECO:0007669"/>
    <property type="project" value="UniProtKB-SubCell"/>
</dbReference>
<dbReference type="GO" id="GO:0016149">
    <property type="term" value="F:translation release factor activity, codon specific"/>
    <property type="evidence" value="ECO:0007669"/>
    <property type="project" value="UniProtKB-UniRule"/>
</dbReference>
<dbReference type="FunFam" id="3.30.160.20:FF:000004">
    <property type="entry name" value="Peptide chain release factor 1"/>
    <property type="match status" value="1"/>
</dbReference>
<dbReference type="FunFam" id="3.30.70.1660:FF:000002">
    <property type="entry name" value="Peptide chain release factor 1"/>
    <property type="match status" value="1"/>
</dbReference>
<dbReference type="FunFam" id="3.30.70.1660:FF:000004">
    <property type="entry name" value="Peptide chain release factor 1"/>
    <property type="match status" value="1"/>
</dbReference>
<dbReference type="Gene3D" id="3.30.160.20">
    <property type="match status" value="1"/>
</dbReference>
<dbReference type="Gene3D" id="3.30.70.1660">
    <property type="match status" value="2"/>
</dbReference>
<dbReference type="Gene3D" id="6.10.140.1950">
    <property type="match status" value="1"/>
</dbReference>
<dbReference type="HAMAP" id="MF_00093">
    <property type="entry name" value="Rel_fac_1"/>
    <property type="match status" value="1"/>
</dbReference>
<dbReference type="InterPro" id="IPR005139">
    <property type="entry name" value="PCRF"/>
</dbReference>
<dbReference type="InterPro" id="IPR000352">
    <property type="entry name" value="Pep_chain_release_fac_I"/>
</dbReference>
<dbReference type="InterPro" id="IPR045853">
    <property type="entry name" value="Pep_chain_release_fac_I_sf"/>
</dbReference>
<dbReference type="InterPro" id="IPR050057">
    <property type="entry name" value="Prokaryotic/Mito_RF"/>
</dbReference>
<dbReference type="InterPro" id="IPR004373">
    <property type="entry name" value="RF-1"/>
</dbReference>
<dbReference type="NCBIfam" id="TIGR00019">
    <property type="entry name" value="prfA"/>
    <property type="match status" value="1"/>
</dbReference>
<dbReference type="NCBIfam" id="NF001859">
    <property type="entry name" value="PRK00591.1"/>
    <property type="match status" value="1"/>
</dbReference>
<dbReference type="PANTHER" id="PTHR43804">
    <property type="entry name" value="LD18447P"/>
    <property type="match status" value="1"/>
</dbReference>
<dbReference type="PANTHER" id="PTHR43804:SF7">
    <property type="entry name" value="LD18447P"/>
    <property type="match status" value="1"/>
</dbReference>
<dbReference type="Pfam" id="PF03462">
    <property type="entry name" value="PCRF"/>
    <property type="match status" value="1"/>
</dbReference>
<dbReference type="Pfam" id="PF00472">
    <property type="entry name" value="RF-1"/>
    <property type="match status" value="1"/>
</dbReference>
<dbReference type="SMART" id="SM00937">
    <property type="entry name" value="PCRF"/>
    <property type="match status" value="1"/>
</dbReference>
<dbReference type="SUPFAM" id="SSF75620">
    <property type="entry name" value="Release factor"/>
    <property type="match status" value="1"/>
</dbReference>
<dbReference type="PROSITE" id="PS00745">
    <property type="entry name" value="RF_PROK_I"/>
    <property type="match status" value="1"/>
</dbReference>
<gene>
    <name evidence="1" type="primary">prfA</name>
    <name type="ordered locus">NGK_1562</name>
</gene>
<reference key="1">
    <citation type="journal article" date="2008" name="J. Bacteriol.">
        <title>Complete genome sequence of Neisseria gonorrhoeae NCCP11945.</title>
        <authorList>
            <person name="Chung G.T."/>
            <person name="Yoo J.S."/>
            <person name="Oh H.B."/>
            <person name="Lee Y.S."/>
            <person name="Cha S.H."/>
            <person name="Kim S.J."/>
            <person name="Yoo C.K."/>
        </authorList>
    </citation>
    <scope>NUCLEOTIDE SEQUENCE [LARGE SCALE GENOMIC DNA]</scope>
    <source>
        <strain>NCCP11945</strain>
    </source>
</reference>